<gene>
    <name type="primary">dnaE</name>
    <name type="ordered locus">VC_2245</name>
</gene>
<name>DPO3A_VIBCH</name>
<reference key="1">
    <citation type="journal article" date="1996" name="Gene">
        <title>Cloning and characterization of dnaE, encoding the catalytic subunit of replicative DNA polymerase III, from Vibrio cholerae strain C6706.</title>
        <authorList>
            <person name="Franco A.A."/>
            <person name="Yeh P.E."/>
            <person name="Johnson J.A."/>
            <person name="Barry E.M."/>
            <person name="Guerra H."/>
            <person name="Maurer R."/>
            <person name="Morris J.G. Jr."/>
        </authorList>
    </citation>
    <scope>NUCLEOTIDE SEQUENCE [GENOMIC DNA]</scope>
    <source>
        <strain>El Tor Inaba C6706 / Serotype O1</strain>
    </source>
</reference>
<reference key="2">
    <citation type="journal article" date="2000" name="Nature">
        <title>DNA sequence of both chromosomes of the cholera pathogen Vibrio cholerae.</title>
        <authorList>
            <person name="Heidelberg J.F."/>
            <person name="Eisen J.A."/>
            <person name="Nelson W.C."/>
            <person name="Clayton R.A."/>
            <person name="Gwinn M.L."/>
            <person name="Dodson R.J."/>
            <person name="Haft D.H."/>
            <person name="Hickey E.K."/>
            <person name="Peterson J.D."/>
            <person name="Umayam L.A."/>
            <person name="Gill S.R."/>
            <person name="Nelson K.E."/>
            <person name="Read T.D."/>
            <person name="Tettelin H."/>
            <person name="Richardson D.L."/>
            <person name="Ermolaeva M.D."/>
            <person name="Vamathevan J.J."/>
            <person name="Bass S."/>
            <person name="Qin H."/>
            <person name="Dragoi I."/>
            <person name="Sellers P."/>
            <person name="McDonald L.A."/>
            <person name="Utterback T.R."/>
            <person name="Fleischmann R.D."/>
            <person name="Nierman W.C."/>
            <person name="White O."/>
            <person name="Salzberg S.L."/>
            <person name="Smith H.O."/>
            <person name="Colwell R.R."/>
            <person name="Mekalanos J.J."/>
            <person name="Venter J.C."/>
            <person name="Fraser C.M."/>
        </authorList>
    </citation>
    <scope>NUCLEOTIDE SEQUENCE [LARGE SCALE GENOMIC DNA]</scope>
    <source>
        <strain>ATCC 39315 / El Tor Inaba N16961</strain>
    </source>
</reference>
<accession>P52022</accession>
<accession>Q9KPW7</accession>
<proteinExistence type="inferred from homology"/>
<keyword id="KW-0963">Cytoplasm</keyword>
<keyword id="KW-0235">DNA replication</keyword>
<keyword id="KW-0239">DNA-directed DNA polymerase</keyword>
<keyword id="KW-0548">Nucleotidyltransferase</keyword>
<keyword id="KW-1185">Reference proteome</keyword>
<keyword id="KW-0808">Transferase</keyword>
<comment type="function">
    <text evidence="1">DNA polymerase III is a complex, multichain enzyme responsible for most of the replicative synthesis in bacteria. This DNA polymerase also exhibits 3' to 5' exonuclease activity. The alpha chain is the DNA polymerase (By similarity).</text>
</comment>
<comment type="catalytic activity">
    <reaction>
        <text>DNA(n) + a 2'-deoxyribonucleoside 5'-triphosphate = DNA(n+1) + diphosphate</text>
        <dbReference type="Rhea" id="RHEA:22508"/>
        <dbReference type="Rhea" id="RHEA-COMP:17339"/>
        <dbReference type="Rhea" id="RHEA-COMP:17340"/>
        <dbReference type="ChEBI" id="CHEBI:33019"/>
        <dbReference type="ChEBI" id="CHEBI:61560"/>
        <dbReference type="ChEBI" id="CHEBI:173112"/>
        <dbReference type="EC" id="2.7.7.7"/>
    </reaction>
</comment>
<comment type="subunit">
    <text evidence="1">DNA polymerase III contains a core (composed of alpha, epsilon and theta chains) that associates with a tau subunit. This core dimerizes to form the PolIII' complex. PolIII' associates with the gamma complex (composed of gamma, delta, delta', psi and chi chains) and with the beta chain to form the complete DNA polymerase III complex (By similarity).</text>
</comment>
<comment type="subcellular location">
    <subcellularLocation>
        <location evidence="1">Cytoplasm</location>
    </subcellularLocation>
</comment>
<comment type="similarity">
    <text evidence="2">Belongs to the DNA polymerase type-C family. DnaE subfamily.</text>
</comment>
<comment type="sequence caution" evidence="2">
    <conflict type="erroneous initiation">
        <sequence resource="EMBL-CDS" id="AAF95389"/>
    </conflict>
</comment>
<protein>
    <recommendedName>
        <fullName>DNA polymerase III subunit alpha</fullName>
        <ecNumber>2.7.7.7</ecNumber>
    </recommendedName>
</protein>
<feature type="chain" id="PRO_0000103358" description="DNA polymerase III subunit alpha">
    <location>
        <begin position="1"/>
        <end position="1159"/>
    </location>
</feature>
<feature type="sequence conflict" description="In Ref. 1; AAC44578." evidence="2" ref="1">
    <original>I</original>
    <variation>V</variation>
    <location>
        <position position="343"/>
    </location>
</feature>
<feature type="sequence conflict" description="In Ref. 1; AAC44578." evidence="2" ref="1">
    <original>ALQ</original>
    <variation>ELK</variation>
    <location>
        <begin position="480"/>
        <end position="482"/>
    </location>
</feature>
<feature type="sequence conflict" description="In Ref. 1; AAC44578." evidence="2" ref="1">
    <original>T</original>
    <variation>P</variation>
    <location>
        <position position="680"/>
    </location>
</feature>
<feature type="sequence conflict" description="In Ref. 1; AAC44578." evidence="2" ref="1">
    <original>V</original>
    <variation>A</variation>
    <location>
        <position position="995"/>
    </location>
</feature>
<feature type="sequence conflict" description="In Ref. 1; AAC44578." evidence="2" ref="1">
    <original>M</original>
    <variation>L</variation>
    <location>
        <position position="1025"/>
    </location>
</feature>
<feature type="sequence conflict" description="In Ref. 1; AAC44578." evidence="2" ref="1">
    <original>E</original>
    <variation>G</variation>
    <location>
        <position position="1098"/>
    </location>
</feature>
<feature type="sequence conflict" description="In Ref. 1; AAC44578." evidence="2" ref="1">
    <original>V</original>
    <variation>A</variation>
    <location>
        <position position="1112"/>
    </location>
</feature>
<evidence type="ECO:0000250" key="1"/>
<evidence type="ECO:0000305" key="2"/>
<sequence length="1159" mass="130057">MSDPKFIHLRIHSDFSMVDGLSKVPPLVKKVAAMGMPAMALTDFTNLCGLVKFYSTAHNCGVKPIIGADFTLQSEEFGDELTKLTLLAKNNVGYKNLTLLISKAYLRGHVQHQPVIDKAWLVEHAEGLIVLSGGKSGEVGRALLKGNQQQVERCIEFYQTHFADHFYLELIRTGRADEESYLHFALDVAEQYDLPVVATNEVVFITEESFEAHEIRVAIHDGYTLEDPRRPKNYSPKQYLRSEAEMCELFADIPEALANSVEIAKRCNVTVRLGEYFLPNFPTGGMAIEDFLVMKSREGLEERLEFLFPDPEVRAKRRPEYDERLQVELDVINQMGFPGYFLIVMEFIQWSKDNDIPVGPGRGSGAGSLVAYALKITDLDPLEYDLLFERFLNPERVSMPDFDVDFCMDKRDQVIDHVAEMYGRDAVSQIITFGTMAAKAVIRDVGRVLGHPFGFVDRISKLVPPDPGMTLEKAFIAEPALQELYDADEEVKELIDKCRILEGCTRNAGKHAGGVVISPTAITDFAPIYCDAEGNFPVTQFDKNDVETAGLVKFDFLGLRTLTIIDWALGLVNPRLKKAGKPPVRIEAIPLDDARSFRNLQDAKTTAVFQLESRGMKELIKRLQPDCFEDIIALVALFRPGPLQSGMVDNFIDRKHGREAISYPDEKWQHESLKEILEPTYGIILYQEQVMQIAQVLSGYTLGGADMLRRAMGKKKPEEMAKQRAVFQEGAEKNGVDGELAMKIFDLVEKFAGYGFNKSHSAAYALVSYQTLWLKTHYPAEFMAAVMTADMDNTEKVVGLVDECKNMGLTVLPPDINSGLYRFNVDDNGAIVYGIGAIKGVGEGPIEAILEARNKGGYFKDLFDFCARIDLKKVNKRVIEKLILAGALDRLGPHRAAMMASVDDAVRAASQHHQAEAFGQADMFGVLTDAPEEVEQKYTQVPEWPEKVRLEGERETLGLYLTGHPVDEYLKELTKYTSCRLNEAAPTRRDQSLTVAGLVIAARVMTTKRGTRIGLMTLDDRSGRMEVMLYSEALDRYAEWLEKDKILVVSGQVSFDDFNGGLKMSAREVMDLGSAREKFARGLSISILQSQIDQQFFERFSHILEPHRAGTVPVNVYYQRPDARARLTLGTEWRVTPSDTLLDELKQLLGHDQVELEFN</sequence>
<organism>
    <name type="scientific">Vibrio cholerae serotype O1 (strain ATCC 39315 / El Tor Inaba N16961)</name>
    <dbReference type="NCBI Taxonomy" id="243277"/>
    <lineage>
        <taxon>Bacteria</taxon>
        <taxon>Pseudomonadati</taxon>
        <taxon>Pseudomonadota</taxon>
        <taxon>Gammaproteobacteria</taxon>
        <taxon>Vibrionales</taxon>
        <taxon>Vibrionaceae</taxon>
        <taxon>Vibrio</taxon>
    </lineage>
</organism>
<dbReference type="EC" id="2.7.7.7"/>
<dbReference type="EMBL" id="U30472">
    <property type="protein sequence ID" value="AAC44578.1"/>
    <property type="molecule type" value="Genomic_DNA"/>
</dbReference>
<dbReference type="EMBL" id="AE003852">
    <property type="protein sequence ID" value="AAF95389.1"/>
    <property type="status" value="ALT_INIT"/>
    <property type="molecule type" value="Genomic_DNA"/>
</dbReference>
<dbReference type="PIR" id="G82100">
    <property type="entry name" value="G82100"/>
</dbReference>
<dbReference type="RefSeq" id="NP_231876.1">
    <property type="nucleotide sequence ID" value="NC_002505.1"/>
</dbReference>
<dbReference type="RefSeq" id="WP_001909664.1">
    <property type="nucleotide sequence ID" value="NZ_LT906614.1"/>
</dbReference>
<dbReference type="SMR" id="P52022"/>
<dbReference type="STRING" id="243277.VC_2245"/>
<dbReference type="DNASU" id="2613167"/>
<dbReference type="EnsemblBacteria" id="AAF95389">
    <property type="protein sequence ID" value="AAF95389"/>
    <property type="gene ID" value="VC_2245"/>
</dbReference>
<dbReference type="GeneID" id="69719130"/>
<dbReference type="KEGG" id="vch:VC_2245"/>
<dbReference type="PATRIC" id="fig|243277.26.peg.2141"/>
<dbReference type="eggNOG" id="COG0587">
    <property type="taxonomic scope" value="Bacteria"/>
</dbReference>
<dbReference type="HOGENOM" id="CLU_001600_0_0_6"/>
<dbReference type="Proteomes" id="UP000000584">
    <property type="component" value="Chromosome 1"/>
</dbReference>
<dbReference type="GO" id="GO:0005737">
    <property type="term" value="C:cytoplasm"/>
    <property type="evidence" value="ECO:0007669"/>
    <property type="project" value="UniProtKB-SubCell"/>
</dbReference>
<dbReference type="GO" id="GO:0008408">
    <property type="term" value="F:3'-5' exonuclease activity"/>
    <property type="evidence" value="ECO:0007669"/>
    <property type="project" value="InterPro"/>
</dbReference>
<dbReference type="GO" id="GO:0003887">
    <property type="term" value="F:DNA-directed DNA polymerase activity"/>
    <property type="evidence" value="ECO:0000318"/>
    <property type="project" value="GO_Central"/>
</dbReference>
<dbReference type="GO" id="GO:0003676">
    <property type="term" value="F:nucleic acid binding"/>
    <property type="evidence" value="ECO:0007669"/>
    <property type="project" value="InterPro"/>
</dbReference>
<dbReference type="GO" id="GO:0006260">
    <property type="term" value="P:DNA replication"/>
    <property type="evidence" value="ECO:0007669"/>
    <property type="project" value="UniProtKB-KW"/>
</dbReference>
<dbReference type="CDD" id="cd04485">
    <property type="entry name" value="DnaE_OBF"/>
    <property type="match status" value="1"/>
</dbReference>
<dbReference type="CDD" id="cd07433">
    <property type="entry name" value="PHP_PolIIIA_DnaE1"/>
    <property type="match status" value="1"/>
</dbReference>
<dbReference type="FunFam" id="1.10.10.1600:FF:000001">
    <property type="entry name" value="DNA polymerase III subunit alpha"/>
    <property type="match status" value="1"/>
</dbReference>
<dbReference type="FunFam" id="1.10.150.870:FF:000001">
    <property type="entry name" value="DNA polymerase III subunit alpha"/>
    <property type="match status" value="1"/>
</dbReference>
<dbReference type="FunFam" id="2.40.50.140:FF:000106">
    <property type="entry name" value="DNA polymerase III subunit alpha"/>
    <property type="match status" value="1"/>
</dbReference>
<dbReference type="FunFam" id="3.20.20.140:FF:000028">
    <property type="entry name" value="DNA polymerase III subunit alpha"/>
    <property type="match status" value="1"/>
</dbReference>
<dbReference type="Gene3D" id="1.10.150.870">
    <property type="match status" value="1"/>
</dbReference>
<dbReference type="Gene3D" id="1.10.10.1600">
    <property type="entry name" value="Bacterial DNA polymerase III alpha subunit, thumb domain"/>
    <property type="match status" value="1"/>
</dbReference>
<dbReference type="Gene3D" id="3.20.20.140">
    <property type="entry name" value="Metal-dependent hydrolases"/>
    <property type="match status" value="1"/>
</dbReference>
<dbReference type="Gene3D" id="2.40.50.140">
    <property type="entry name" value="Nucleic acid-binding proteins"/>
    <property type="match status" value="1"/>
</dbReference>
<dbReference type="InterPro" id="IPR011708">
    <property type="entry name" value="DNA_pol3_alpha_NTPase_dom"/>
</dbReference>
<dbReference type="InterPro" id="IPR041931">
    <property type="entry name" value="DNA_pol3_alpha_thumb_dom"/>
</dbReference>
<dbReference type="InterPro" id="IPR040982">
    <property type="entry name" value="DNA_pol3_finger"/>
</dbReference>
<dbReference type="InterPro" id="IPR048472">
    <property type="entry name" value="DNA_pol_IIIA_C"/>
</dbReference>
<dbReference type="InterPro" id="IPR004805">
    <property type="entry name" value="DnaE2/DnaE/PolC"/>
</dbReference>
<dbReference type="InterPro" id="IPR029460">
    <property type="entry name" value="DNAPol_HHH"/>
</dbReference>
<dbReference type="InterPro" id="IPR012340">
    <property type="entry name" value="NA-bd_OB-fold"/>
</dbReference>
<dbReference type="InterPro" id="IPR004365">
    <property type="entry name" value="NA-bd_OB_tRNA"/>
</dbReference>
<dbReference type="InterPro" id="IPR004013">
    <property type="entry name" value="PHP_dom"/>
</dbReference>
<dbReference type="InterPro" id="IPR003141">
    <property type="entry name" value="Pol/His_phosphatase_N"/>
</dbReference>
<dbReference type="InterPro" id="IPR016195">
    <property type="entry name" value="Pol/histidinol_Pase-like"/>
</dbReference>
<dbReference type="InterPro" id="IPR049821">
    <property type="entry name" value="PolIIIA_DnaE1_PHP"/>
</dbReference>
<dbReference type="NCBIfam" id="TIGR00594">
    <property type="entry name" value="polc"/>
    <property type="match status" value="1"/>
</dbReference>
<dbReference type="NCBIfam" id="NF004226">
    <property type="entry name" value="PRK05673.1"/>
    <property type="match status" value="1"/>
</dbReference>
<dbReference type="PANTHER" id="PTHR32294">
    <property type="entry name" value="DNA POLYMERASE III SUBUNIT ALPHA"/>
    <property type="match status" value="1"/>
</dbReference>
<dbReference type="PANTHER" id="PTHR32294:SF0">
    <property type="entry name" value="DNA POLYMERASE III SUBUNIT ALPHA"/>
    <property type="match status" value="1"/>
</dbReference>
<dbReference type="Pfam" id="PF07733">
    <property type="entry name" value="DNA_pol3_alpha"/>
    <property type="match status" value="1"/>
</dbReference>
<dbReference type="Pfam" id="PF17657">
    <property type="entry name" value="DNA_pol3_finger"/>
    <property type="match status" value="1"/>
</dbReference>
<dbReference type="Pfam" id="PF20914">
    <property type="entry name" value="DNA_pol_IIIA_C"/>
    <property type="match status" value="1"/>
</dbReference>
<dbReference type="Pfam" id="PF14579">
    <property type="entry name" value="HHH_6"/>
    <property type="match status" value="1"/>
</dbReference>
<dbReference type="Pfam" id="PF02811">
    <property type="entry name" value="PHP"/>
    <property type="match status" value="1"/>
</dbReference>
<dbReference type="Pfam" id="PF01336">
    <property type="entry name" value="tRNA_anti-codon"/>
    <property type="match status" value="1"/>
</dbReference>
<dbReference type="SMART" id="SM00481">
    <property type="entry name" value="POLIIIAc"/>
    <property type="match status" value="1"/>
</dbReference>
<dbReference type="SUPFAM" id="SSF89550">
    <property type="entry name" value="PHP domain-like"/>
    <property type="match status" value="1"/>
</dbReference>